<keyword id="KW-0460">Magnesium</keyword>
<keyword id="KW-0464">Manganese</keyword>
<keyword id="KW-0474">Menaquinone biosynthesis</keyword>
<keyword id="KW-0479">Metal-binding</keyword>
<keyword id="KW-0786">Thiamine pyrophosphate</keyword>
<keyword id="KW-0808">Transferase</keyword>
<proteinExistence type="inferred from homology"/>
<feature type="chain" id="PRO_1000215860" description="2-succinyl-5-enolpyruvyl-6-hydroxy-3-cyclohexene-1-carboxylate synthase">
    <location>
        <begin position="1"/>
        <end position="560"/>
    </location>
</feature>
<reference key="1">
    <citation type="submission" date="2009-07" db="EMBL/GenBank/DDBJ databases">
        <title>Complete sequence of Pectobacterium carotovorum subsp. carotovorum PC1.</title>
        <authorList>
            <consortium name="US DOE Joint Genome Institute"/>
            <person name="Lucas S."/>
            <person name="Copeland A."/>
            <person name="Lapidus A."/>
            <person name="Glavina del Rio T."/>
            <person name="Tice H."/>
            <person name="Bruce D."/>
            <person name="Goodwin L."/>
            <person name="Pitluck S."/>
            <person name="Munk A.C."/>
            <person name="Brettin T."/>
            <person name="Detter J.C."/>
            <person name="Han C."/>
            <person name="Tapia R."/>
            <person name="Larimer F."/>
            <person name="Land M."/>
            <person name="Hauser L."/>
            <person name="Kyrpides N."/>
            <person name="Mikhailova N."/>
            <person name="Balakrishnan V."/>
            <person name="Glasner J."/>
            <person name="Perna N.T."/>
        </authorList>
    </citation>
    <scope>NUCLEOTIDE SEQUENCE [LARGE SCALE GENOMIC DNA]</scope>
    <source>
        <strain>PC1</strain>
    </source>
</reference>
<gene>
    <name evidence="1" type="primary">menD</name>
    <name type="ordered locus">PC1_1111</name>
</gene>
<dbReference type="EC" id="2.2.1.9" evidence="1"/>
<dbReference type="EMBL" id="CP001657">
    <property type="protein sequence ID" value="ACT12159.1"/>
    <property type="molecule type" value="Genomic_DNA"/>
</dbReference>
<dbReference type="RefSeq" id="WP_015839399.1">
    <property type="nucleotide sequence ID" value="NC_012917.1"/>
</dbReference>
<dbReference type="SMR" id="C6DBP2"/>
<dbReference type="STRING" id="561230.PC1_1111"/>
<dbReference type="KEGG" id="pct:PC1_1111"/>
<dbReference type="eggNOG" id="COG1165">
    <property type="taxonomic scope" value="Bacteria"/>
</dbReference>
<dbReference type="HOGENOM" id="CLU_006051_3_0_6"/>
<dbReference type="OrthoDB" id="9791859at2"/>
<dbReference type="UniPathway" id="UPA00079"/>
<dbReference type="UniPathway" id="UPA01057">
    <property type="reaction ID" value="UER00164"/>
</dbReference>
<dbReference type="Proteomes" id="UP000002736">
    <property type="component" value="Chromosome"/>
</dbReference>
<dbReference type="GO" id="GO:0070204">
    <property type="term" value="F:2-succinyl-5-enolpyruvyl-6-hydroxy-3-cyclohexene-1-carboxylic-acid synthase activity"/>
    <property type="evidence" value="ECO:0007669"/>
    <property type="project" value="UniProtKB-UniRule"/>
</dbReference>
<dbReference type="GO" id="GO:0000287">
    <property type="term" value="F:magnesium ion binding"/>
    <property type="evidence" value="ECO:0007669"/>
    <property type="project" value="UniProtKB-UniRule"/>
</dbReference>
<dbReference type="GO" id="GO:0030145">
    <property type="term" value="F:manganese ion binding"/>
    <property type="evidence" value="ECO:0007669"/>
    <property type="project" value="UniProtKB-UniRule"/>
</dbReference>
<dbReference type="GO" id="GO:0030976">
    <property type="term" value="F:thiamine pyrophosphate binding"/>
    <property type="evidence" value="ECO:0007669"/>
    <property type="project" value="UniProtKB-UniRule"/>
</dbReference>
<dbReference type="GO" id="GO:0009234">
    <property type="term" value="P:menaquinone biosynthetic process"/>
    <property type="evidence" value="ECO:0007669"/>
    <property type="project" value="UniProtKB-UniRule"/>
</dbReference>
<dbReference type="CDD" id="cd07037">
    <property type="entry name" value="TPP_PYR_MenD"/>
    <property type="match status" value="1"/>
</dbReference>
<dbReference type="CDD" id="cd02009">
    <property type="entry name" value="TPP_SHCHC_synthase"/>
    <property type="match status" value="1"/>
</dbReference>
<dbReference type="FunFam" id="3.40.50.970:FF:000029">
    <property type="entry name" value="2-succinyl-5-enolpyruvyl-6-hydroxy-3-cyclohexene-1-carboxylate synthase"/>
    <property type="match status" value="1"/>
</dbReference>
<dbReference type="Gene3D" id="3.40.50.970">
    <property type="match status" value="2"/>
</dbReference>
<dbReference type="Gene3D" id="3.40.50.1220">
    <property type="entry name" value="TPP-binding domain"/>
    <property type="match status" value="1"/>
</dbReference>
<dbReference type="HAMAP" id="MF_01659">
    <property type="entry name" value="MenD"/>
    <property type="match status" value="1"/>
</dbReference>
<dbReference type="InterPro" id="IPR029035">
    <property type="entry name" value="DHS-like_NAD/FAD-binding_dom"/>
</dbReference>
<dbReference type="InterPro" id="IPR004433">
    <property type="entry name" value="MenaQ_synth_MenD"/>
</dbReference>
<dbReference type="InterPro" id="IPR032264">
    <property type="entry name" value="MenD_middle"/>
</dbReference>
<dbReference type="InterPro" id="IPR029061">
    <property type="entry name" value="THDP-binding"/>
</dbReference>
<dbReference type="InterPro" id="IPR012001">
    <property type="entry name" value="Thiamin_PyroP_enz_TPP-bd_dom"/>
</dbReference>
<dbReference type="InterPro" id="IPR011766">
    <property type="entry name" value="TPP_enzyme_TPP-bd"/>
</dbReference>
<dbReference type="NCBIfam" id="TIGR00173">
    <property type="entry name" value="menD"/>
    <property type="match status" value="1"/>
</dbReference>
<dbReference type="PANTHER" id="PTHR42916">
    <property type="entry name" value="2-SUCCINYL-5-ENOLPYRUVYL-6-HYDROXY-3-CYCLOHEXENE-1-CARBOXYLATE SYNTHASE"/>
    <property type="match status" value="1"/>
</dbReference>
<dbReference type="PANTHER" id="PTHR42916:SF1">
    <property type="entry name" value="PROTEIN PHYLLO, CHLOROPLASTIC"/>
    <property type="match status" value="1"/>
</dbReference>
<dbReference type="Pfam" id="PF02775">
    <property type="entry name" value="TPP_enzyme_C"/>
    <property type="match status" value="1"/>
</dbReference>
<dbReference type="Pfam" id="PF16582">
    <property type="entry name" value="TPP_enzyme_M_2"/>
    <property type="match status" value="1"/>
</dbReference>
<dbReference type="Pfam" id="PF02776">
    <property type="entry name" value="TPP_enzyme_N"/>
    <property type="match status" value="1"/>
</dbReference>
<dbReference type="PIRSF" id="PIRSF004983">
    <property type="entry name" value="MenD"/>
    <property type="match status" value="1"/>
</dbReference>
<dbReference type="SUPFAM" id="SSF52467">
    <property type="entry name" value="DHS-like NAD/FAD-binding domain"/>
    <property type="match status" value="1"/>
</dbReference>
<dbReference type="SUPFAM" id="SSF52518">
    <property type="entry name" value="Thiamin diphosphate-binding fold (THDP-binding)"/>
    <property type="match status" value="2"/>
</dbReference>
<sequence>MSTSVFNRRWATLLLESLTRHGVRHVCIAPGSRSTPLTLSAADNHALICHTHFDERGLGHLALGLAKASREPVAIIVTSGTAAANLYPAIIEAGLTGERLVVLTADRPPELIDCGANQAIRQHALYASHPTLALDLPRPTPDIPASWLVSSVDSAMARLAHGALHINCPFAEPLYGADDGTAYQDWLIALGDWWSSREPWLREMRQSALAEQPDWPQWRQKRGVVLVGRVSPEQGARLAAWANELGWPLIGDVLSQSGQPLPCADIWLAHPDAADRLRQAEIVLQFGGSLTGKRLLQWQEQCQPQEFWLIDDLPGRLDPAHHRGRRLVADVGEWLSAHPAHKQAPWADMLVDIADKTQRQIDTHLASRFGEAQLAQRIPALLPPDGQLFVGNSLVVRLIDALAQLPQGYPVYGNRGASGIDGLISTLAGVQRATAKPMLGIVGDLSALYDLNALALLRQAPAPLVLIVVNNNGGQIFSLLPTPVAQRETFYCMPQNVEFGHAAAMFGLNYVRADNWEQLANTVTDCWAQGGVTLLEVVVEPKDGAATLNELVAQVATWAH</sequence>
<protein>
    <recommendedName>
        <fullName evidence="1">2-succinyl-5-enolpyruvyl-6-hydroxy-3-cyclohexene-1-carboxylate synthase</fullName>
        <shortName evidence="1">SEPHCHC synthase</shortName>
        <ecNumber evidence="1">2.2.1.9</ecNumber>
    </recommendedName>
    <alternativeName>
        <fullName evidence="1">Menaquinone biosynthesis protein MenD</fullName>
    </alternativeName>
</protein>
<evidence type="ECO:0000255" key="1">
    <source>
        <dbReference type="HAMAP-Rule" id="MF_01659"/>
    </source>
</evidence>
<organism>
    <name type="scientific">Pectobacterium carotovorum subsp. carotovorum (strain PC1)</name>
    <dbReference type="NCBI Taxonomy" id="561230"/>
    <lineage>
        <taxon>Bacteria</taxon>
        <taxon>Pseudomonadati</taxon>
        <taxon>Pseudomonadota</taxon>
        <taxon>Gammaproteobacteria</taxon>
        <taxon>Enterobacterales</taxon>
        <taxon>Pectobacteriaceae</taxon>
        <taxon>Pectobacterium</taxon>
    </lineage>
</organism>
<accession>C6DBP2</accession>
<name>MEND_PECCP</name>
<comment type="function">
    <text evidence="1">Catalyzes the thiamine diphosphate-dependent decarboxylation of 2-oxoglutarate and the subsequent addition of the resulting succinic semialdehyde-thiamine pyrophosphate anion to isochorismate to yield 2-succinyl-5-enolpyruvyl-6-hydroxy-3-cyclohexene-1-carboxylate (SEPHCHC).</text>
</comment>
<comment type="catalytic activity">
    <reaction evidence="1">
        <text>isochorismate + 2-oxoglutarate + H(+) = 5-enolpyruvoyl-6-hydroxy-2-succinyl-cyclohex-3-ene-1-carboxylate + CO2</text>
        <dbReference type="Rhea" id="RHEA:25593"/>
        <dbReference type="ChEBI" id="CHEBI:15378"/>
        <dbReference type="ChEBI" id="CHEBI:16526"/>
        <dbReference type="ChEBI" id="CHEBI:16810"/>
        <dbReference type="ChEBI" id="CHEBI:29780"/>
        <dbReference type="ChEBI" id="CHEBI:58818"/>
        <dbReference type="EC" id="2.2.1.9"/>
    </reaction>
</comment>
<comment type="cofactor">
    <cofactor evidence="1">
        <name>Mg(2+)</name>
        <dbReference type="ChEBI" id="CHEBI:18420"/>
    </cofactor>
    <cofactor evidence="1">
        <name>Mn(2+)</name>
        <dbReference type="ChEBI" id="CHEBI:29035"/>
    </cofactor>
</comment>
<comment type="cofactor">
    <cofactor evidence="1">
        <name>thiamine diphosphate</name>
        <dbReference type="ChEBI" id="CHEBI:58937"/>
    </cofactor>
    <text evidence="1">Binds 1 thiamine pyrophosphate per subunit.</text>
</comment>
<comment type="pathway">
    <text evidence="1">Quinol/quinone metabolism; 1,4-dihydroxy-2-naphthoate biosynthesis; 1,4-dihydroxy-2-naphthoate from chorismate: step 2/7.</text>
</comment>
<comment type="pathway">
    <text evidence="1">Quinol/quinone metabolism; menaquinone biosynthesis.</text>
</comment>
<comment type="subunit">
    <text evidence="1">Homodimer.</text>
</comment>
<comment type="similarity">
    <text evidence="1">Belongs to the TPP enzyme family. MenD subfamily.</text>
</comment>